<dbReference type="EC" id="2.1.1.144" evidence="1"/>
<dbReference type="EMBL" id="CP001349">
    <property type="protein sequence ID" value="ACL60753.1"/>
    <property type="molecule type" value="Genomic_DNA"/>
</dbReference>
<dbReference type="RefSeq" id="WP_015932348.1">
    <property type="nucleotide sequence ID" value="NC_011894.1"/>
</dbReference>
<dbReference type="SMR" id="B8ISV4"/>
<dbReference type="KEGG" id="mno:Mnod_5925"/>
<dbReference type="eggNOG" id="COG4106">
    <property type="taxonomic scope" value="Bacteria"/>
</dbReference>
<dbReference type="HOGENOM" id="CLU_037990_5_2_5"/>
<dbReference type="OrthoDB" id="9795085at2"/>
<dbReference type="Proteomes" id="UP000008207">
    <property type="component" value="Chromosome"/>
</dbReference>
<dbReference type="GO" id="GO:0005737">
    <property type="term" value="C:cytoplasm"/>
    <property type="evidence" value="ECO:0007669"/>
    <property type="project" value="UniProtKB-SubCell"/>
</dbReference>
<dbReference type="GO" id="GO:0030798">
    <property type="term" value="F:trans-aconitate 2-methyltransferase activity"/>
    <property type="evidence" value="ECO:0007669"/>
    <property type="project" value="UniProtKB-UniRule"/>
</dbReference>
<dbReference type="GO" id="GO:0032259">
    <property type="term" value="P:methylation"/>
    <property type="evidence" value="ECO:0007669"/>
    <property type="project" value="UniProtKB-KW"/>
</dbReference>
<dbReference type="CDD" id="cd02440">
    <property type="entry name" value="AdoMet_MTases"/>
    <property type="match status" value="1"/>
</dbReference>
<dbReference type="Gene3D" id="1.10.150.290">
    <property type="entry name" value="S-adenosyl-L-methionine-dependent methyltransferases"/>
    <property type="match status" value="1"/>
</dbReference>
<dbReference type="Gene3D" id="3.40.50.150">
    <property type="entry name" value="Vaccinia Virus protein VP39"/>
    <property type="match status" value="1"/>
</dbReference>
<dbReference type="HAMAP" id="MF_00560">
    <property type="entry name" value="Tran_acon_Me_trans"/>
    <property type="match status" value="1"/>
</dbReference>
<dbReference type="InterPro" id="IPR041698">
    <property type="entry name" value="Methyltransf_25"/>
</dbReference>
<dbReference type="InterPro" id="IPR029063">
    <property type="entry name" value="SAM-dependent_MTases_sf"/>
</dbReference>
<dbReference type="InterPro" id="IPR023506">
    <property type="entry name" value="Trans-aconitate_MeTrfase"/>
</dbReference>
<dbReference type="InterPro" id="IPR023149">
    <property type="entry name" value="Trans_acon_MeTrfase_C"/>
</dbReference>
<dbReference type="NCBIfam" id="NF002463">
    <property type="entry name" value="PRK01683.1"/>
    <property type="match status" value="1"/>
</dbReference>
<dbReference type="PANTHER" id="PTHR43861:SF1">
    <property type="entry name" value="TRANS-ACONITATE 2-METHYLTRANSFERASE"/>
    <property type="match status" value="1"/>
</dbReference>
<dbReference type="PANTHER" id="PTHR43861">
    <property type="entry name" value="TRANS-ACONITATE 2-METHYLTRANSFERASE-RELATED"/>
    <property type="match status" value="1"/>
</dbReference>
<dbReference type="Pfam" id="PF13649">
    <property type="entry name" value="Methyltransf_25"/>
    <property type="match status" value="1"/>
</dbReference>
<dbReference type="SUPFAM" id="SSF53335">
    <property type="entry name" value="S-adenosyl-L-methionine-dependent methyltransferases"/>
    <property type="match status" value="1"/>
</dbReference>
<protein>
    <recommendedName>
        <fullName evidence="1">Trans-aconitate 2-methyltransferase</fullName>
        <ecNumber evidence="1">2.1.1.144</ecNumber>
    </recommendedName>
</protein>
<gene>
    <name evidence="1" type="primary">tam</name>
    <name type="ordered locus">Mnod_5925</name>
</gene>
<organism>
    <name type="scientific">Methylobacterium nodulans (strain LMG 21967 / CNCM I-2342 / ORS 2060)</name>
    <dbReference type="NCBI Taxonomy" id="460265"/>
    <lineage>
        <taxon>Bacteria</taxon>
        <taxon>Pseudomonadati</taxon>
        <taxon>Pseudomonadota</taxon>
        <taxon>Alphaproteobacteria</taxon>
        <taxon>Hyphomicrobiales</taxon>
        <taxon>Methylobacteriaceae</taxon>
        <taxon>Methylobacterium</taxon>
    </lineage>
</organism>
<reference key="1">
    <citation type="submission" date="2009-01" db="EMBL/GenBank/DDBJ databases">
        <title>Complete sequence of chromosome of Methylobacterium nodulans ORS 2060.</title>
        <authorList>
            <consortium name="US DOE Joint Genome Institute"/>
            <person name="Lucas S."/>
            <person name="Copeland A."/>
            <person name="Lapidus A."/>
            <person name="Glavina del Rio T."/>
            <person name="Dalin E."/>
            <person name="Tice H."/>
            <person name="Bruce D."/>
            <person name="Goodwin L."/>
            <person name="Pitluck S."/>
            <person name="Sims D."/>
            <person name="Brettin T."/>
            <person name="Detter J.C."/>
            <person name="Han C."/>
            <person name="Larimer F."/>
            <person name="Land M."/>
            <person name="Hauser L."/>
            <person name="Kyrpides N."/>
            <person name="Ivanova N."/>
            <person name="Marx C.J."/>
            <person name="Richardson P."/>
        </authorList>
    </citation>
    <scope>NUCLEOTIDE SEQUENCE [LARGE SCALE GENOMIC DNA]</scope>
    <source>
        <strain>LMG 21967 / CNCM I-2342 / ORS 2060</strain>
    </source>
</reference>
<comment type="function">
    <text evidence="1">Catalyzes the S-adenosylmethionine monomethyl esterification of trans-aconitate.</text>
</comment>
<comment type="catalytic activity">
    <reaction evidence="1">
        <text>trans-aconitate + S-adenosyl-L-methionine = (E)-3-(methoxycarbonyl)pent-2-enedioate + S-adenosyl-L-homocysteine</text>
        <dbReference type="Rhea" id="RHEA:14969"/>
        <dbReference type="ChEBI" id="CHEBI:15708"/>
        <dbReference type="ChEBI" id="CHEBI:57470"/>
        <dbReference type="ChEBI" id="CHEBI:57856"/>
        <dbReference type="ChEBI" id="CHEBI:59789"/>
        <dbReference type="EC" id="2.1.1.144"/>
    </reaction>
</comment>
<comment type="subcellular location">
    <subcellularLocation>
        <location evidence="1">Cytoplasm</location>
    </subcellularLocation>
</comment>
<comment type="similarity">
    <text evidence="1">Belongs to the methyltransferase superfamily. Tam family.</text>
</comment>
<keyword id="KW-0963">Cytoplasm</keyword>
<keyword id="KW-0489">Methyltransferase</keyword>
<keyword id="KW-1185">Reference proteome</keyword>
<keyword id="KW-0949">S-adenosyl-L-methionine</keyword>
<keyword id="KW-0808">Transferase</keyword>
<proteinExistence type="inferred from homology"/>
<name>TAM_METNO</name>
<accession>B8ISV4</accession>
<feature type="chain" id="PRO_1000196656" description="Trans-aconitate 2-methyltransferase">
    <location>
        <begin position="1"/>
        <end position="258"/>
    </location>
</feature>
<evidence type="ECO:0000255" key="1">
    <source>
        <dbReference type="HAMAP-Rule" id="MF_00560"/>
    </source>
</evidence>
<sequence length="258" mass="28028">MADWDAAQYLKFADERTRPAADLLARVPLAAPARVVDLGCGPGNSTELLVARYPEAAILGLDTSPGMLAEARRRLPGVAFEQADVASLNPEPPPDLLFANAVLQWLPHHASLLPRLARSLAPGGCLAVQMPDNLEEPSHRLMRRVAGEPPFAARLAAAAASRTRIASFSEYDAWLTAAGCTVDIWRTTYVHALAGHRGIVEWVRGTGLRPFLDPLDAEAQAEFLARYEAALAEAYPPQADGRVLLPFPRLFLVARRTR</sequence>